<comment type="function">
    <text evidence="1">Part of the ABC transporter complex MetNIQ involved in methionine import. Responsible for energy coupling to the transport system.</text>
</comment>
<comment type="catalytic activity">
    <reaction evidence="1">
        <text>L-methionine(out) + ATP + H2O = L-methionine(in) + ADP + phosphate + H(+)</text>
        <dbReference type="Rhea" id="RHEA:29779"/>
        <dbReference type="ChEBI" id="CHEBI:15377"/>
        <dbReference type="ChEBI" id="CHEBI:15378"/>
        <dbReference type="ChEBI" id="CHEBI:30616"/>
        <dbReference type="ChEBI" id="CHEBI:43474"/>
        <dbReference type="ChEBI" id="CHEBI:57844"/>
        <dbReference type="ChEBI" id="CHEBI:456216"/>
        <dbReference type="EC" id="7.4.2.11"/>
    </reaction>
</comment>
<comment type="catalytic activity">
    <reaction evidence="1">
        <text>D-methionine(out) + ATP + H2O = D-methionine(in) + ADP + phosphate + H(+)</text>
        <dbReference type="Rhea" id="RHEA:29767"/>
        <dbReference type="ChEBI" id="CHEBI:15377"/>
        <dbReference type="ChEBI" id="CHEBI:15378"/>
        <dbReference type="ChEBI" id="CHEBI:30616"/>
        <dbReference type="ChEBI" id="CHEBI:43474"/>
        <dbReference type="ChEBI" id="CHEBI:57932"/>
        <dbReference type="ChEBI" id="CHEBI:456216"/>
        <dbReference type="EC" id="7.4.2.11"/>
    </reaction>
</comment>
<comment type="subunit">
    <text evidence="1">The complex is composed of two ATP-binding proteins (MetN), two transmembrane proteins (MetI) and a solute-binding protein (MetQ).</text>
</comment>
<comment type="subcellular location">
    <subcellularLocation>
        <location evidence="1">Cell inner membrane</location>
        <topology evidence="1">Peripheral membrane protein</topology>
    </subcellularLocation>
</comment>
<comment type="similarity">
    <text evidence="1">Belongs to the ABC transporter superfamily. Methionine importer (TC 3.A.1.24) family.</text>
</comment>
<comment type="sequence caution" evidence="2">
    <conflict type="erroneous initiation">
        <sequence resource="EMBL-CDS" id="AAO58614"/>
    </conflict>
</comment>
<gene>
    <name evidence="1" type="primary">metN1</name>
    <name type="synonym">metN-1</name>
    <name type="ordered locus">PSPTO_5188</name>
</gene>
<protein>
    <recommendedName>
        <fullName evidence="1">Methionine import ATP-binding protein MetN 1</fullName>
        <ecNumber evidence="1">7.4.2.11</ecNumber>
    </recommendedName>
</protein>
<sequence>MTATAQRQLPLDTTGAGQLAQQAELHPELNRAHVRFINLGKTYHGKQGAVEALGSIDLAIQRGEIFGIIGRSGAGKSSLIRTINRLEQPSSGRVLIDQVDIGEFNEDKLVELRRRIGMIFQHFNLMSAKTVWQNVELPLKVAGVPKEQRARKVTQLLELVGLQDKHKAYPAQLSGGQKQRVGIARALVHDPAILLCDEATSALDPETTQSILGLLREINQRLGLTIVLITHEMAVIRDICHRVVVLEQGRIVEQGPVWQVFGDPQHEVSKTLLAPLQLGLPKEWAERLSEYPQRPDAAILLDVHFTGVSDEGPDLAALFATLGGKVQLLQGGVERIQDRAIGHLILLIAGSPHPREELLLRARQLAPRVEVLGYVG</sequence>
<feature type="chain" id="PRO_0000270358" description="Methionine import ATP-binding protein MetN 1">
    <location>
        <begin position="1"/>
        <end position="376"/>
    </location>
</feature>
<feature type="domain" description="ABC transporter" evidence="1">
    <location>
        <begin position="34"/>
        <end position="273"/>
    </location>
</feature>
<feature type="binding site" evidence="1">
    <location>
        <begin position="70"/>
        <end position="77"/>
    </location>
    <ligand>
        <name>ATP</name>
        <dbReference type="ChEBI" id="CHEBI:30616"/>
    </ligand>
</feature>
<reference key="1">
    <citation type="journal article" date="2003" name="Proc. Natl. Acad. Sci. U.S.A.">
        <title>The complete genome sequence of the Arabidopsis and tomato pathogen Pseudomonas syringae pv. tomato DC3000.</title>
        <authorList>
            <person name="Buell C.R."/>
            <person name="Joardar V."/>
            <person name="Lindeberg M."/>
            <person name="Selengut J."/>
            <person name="Paulsen I.T."/>
            <person name="Gwinn M.L."/>
            <person name="Dodson R.J."/>
            <person name="DeBoy R.T."/>
            <person name="Durkin A.S."/>
            <person name="Kolonay J.F."/>
            <person name="Madupu R."/>
            <person name="Daugherty S.C."/>
            <person name="Brinkac L.M."/>
            <person name="Beanan M.J."/>
            <person name="Haft D.H."/>
            <person name="Nelson W.C."/>
            <person name="Davidsen T.M."/>
            <person name="Zafar N."/>
            <person name="Zhou L."/>
            <person name="Liu J."/>
            <person name="Yuan Q."/>
            <person name="Khouri H.M."/>
            <person name="Fedorova N.B."/>
            <person name="Tran B."/>
            <person name="Russell D."/>
            <person name="Berry K.J."/>
            <person name="Utterback T.R."/>
            <person name="Van Aken S.E."/>
            <person name="Feldblyum T.V."/>
            <person name="D'Ascenzo M."/>
            <person name="Deng W.-L."/>
            <person name="Ramos A.R."/>
            <person name="Alfano J.R."/>
            <person name="Cartinhour S."/>
            <person name="Chatterjee A.K."/>
            <person name="Delaney T.P."/>
            <person name="Lazarowitz S.G."/>
            <person name="Martin G.B."/>
            <person name="Schneider D.J."/>
            <person name="Tang X."/>
            <person name="Bender C.L."/>
            <person name="White O."/>
            <person name="Fraser C.M."/>
            <person name="Collmer A."/>
        </authorList>
    </citation>
    <scope>NUCLEOTIDE SEQUENCE [LARGE SCALE GENOMIC DNA]</scope>
    <source>
        <strain>ATCC BAA-871 / DC3000</strain>
    </source>
</reference>
<name>METN1_PSESM</name>
<organism>
    <name type="scientific">Pseudomonas syringae pv. tomato (strain ATCC BAA-871 / DC3000)</name>
    <dbReference type="NCBI Taxonomy" id="223283"/>
    <lineage>
        <taxon>Bacteria</taxon>
        <taxon>Pseudomonadati</taxon>
        <taxon>Pseudomonadota</taxon>
        <taxon>Gammaproteobacteria</taxon>
        <taxon>Pseudomonadales</taxon>
        <taxon>Pseudomonadaceae</taxon>
        <taxon>Pseudomonas</taxon>
    </lineage>
</organism>
<keyword id="KW-0029">Amino-acid transport</keyword>
<keyword id="KW-0067">ATP-binding</keyword>
<keyword id="KW-0997">Cell inner membrane</keyword>
<keyword id="KW-1003">Cell membrane</keyword>
<keyword id="KW-0472">Membrane</keyword>
<keyword id="KW-0547">Nucleotide-binding</keyword>
<keyword id="KW-1185">Reference proteome</keyword>
<keyword id="KW-1278">Translocase</keyword>
<keyword id="KW-0813">Transport</keyword>
<dbReference type="EC" id="7.4.2.11" evidence="1"/>
<dbReference type="EMBL" id="AE016853">
    <property type="protein sequence ID" value="AAO58614.1"/>
    <property type="status" value="ALT_INIT"/>
    <property type="molecule type" value="Genomic_DNA"/>
</dbReference>
<dbReference type="RefSeq" id="NP_794919.1">
    <property type="nucleotide sequence ID" value="NC_004578.1"/>
</dbReference>
<dbReference type="RefSeq" id="WP_005765582.1">
    <property type="nucleotide sequence ID" value="NC_004578.1"/>
</dbReference>
<dbReference type="SMR" id="Q87UV4"/>
<dbReference type="STRING" id="223283.PSPTO_5188"/>
<dbReference type="GeneID" id="1186873"/>
<dbReference type="KEGG" id="pst:PSPTO_5188"/>
<dbReference type="PATRIC" id="fig|223283.9.peg.5309"/>
<dbReference type="eggNOG" id="COG1135">
    <property type="taxonomic scope" value="Bacteria"/>
</dbReference>
<dbReference type="HOGENOM" id="CLU_000604_1_3_6"/>
<dbReference type="OrthoDB" id="9802264at2"/>
<dbReference type="Proteomes" id="UP000002515">
    <property type="component" value="Chromosome"/>
</dbReference>
<dbReference type="GO" id="GO:0005886">
    <property type="term" value="C:plasma membrane"/>
    <property type="evidence" value="ECO:0007669"/>
    <property type="project" value="UniProtKB-SubCell"/>
</dbReference>
<dbReference type="GO" id="GO:0033232">
    <property type="term" value="F:ABC-type D-methionine transporter activity"/>
    <property type="evidence" value="ECO:0007669"/>
    <property type="project" value="UniProtKB-EC"/>
</dbReference>
<dbReference type="GO" id="GO:0005524">
    <property type="term" value="F:ATP binding"/>
    <property type="evidence" value="ECO:0007669"/>
    <property type="project" value="UniProtKB-KW"/>
</dbReference>
<dbReference type="GO" id="GO:0016887">
    <property type="term" value="F:ATP hydrolysis activity"/>
    <property type="evidence" value="ECO:0007669"/>
    <property type="project" value="InterPro"/>
</dbReference>
<dbReference type="CDD" id="cd03258">
    <property type="entry name" value="ABC_MetN_methionine_transporter"/>
    <property type="match status" value="1"/>
</dbReference>
<dbReference type="FunFam" id="3.40.50.300:FF:001755">
    <property type="entry name" value="Methionine import ATP-binding protein MetN"/>
    <property type="match status" value="1"/>
</dbReference>
<dbReference type="Gene3D" id="3.30.70.260">
    <property type="match status" value="1"/>
</dbReference>
<dbReference type="Gene3D" id="3.40.50.300">
    <property type="entry name" value="P-loop containing nucleotide triphosphate hydrolases"/>
    <property type="match status" value="1"/>
</dbReference>
<dbReference type="InterPro" id="IPR003593">
    <property type="entry name" value="AAA+_ATPase"/>
</dbReference>
<dbReference type="InterPro" id="IPR003439">
    <property type="entry name" value="ABC_transporter-like_ATP-bd"/>
</dbReference>
<dbReference type="InterPro" id="IPR017871">
    <property type="entry name" value="ABC_transporter-like_CS"/>
</dbReference>
<dbReference type="InterPro" id="IPR045865">
    <property type="entry name" value="ACT-like_dom_sf"/>
</dbReference>
<dbReference type="InterPro" id="IPR041701">
    <property type="entry name" value="MetN_ABC"/>
</dbReference>
<dbReference type="InterPro" id="IPR050086">
    <property type="entry name" value="MetN_ABC_transporter-like"/>
</dbReference>
<dbReference type="InterPro" id="IPR018449">
    <property type="entry name" value="NIL_domain"/>
</dbReference>
<dbReference type="InterPro" id="IPR027417">
    <property type="entry name" value="P-loop_NTPase"/>
</dbReference>
<dbReference type="PANTHER" id="PTHR43166">
    <property type="entry name" value="AMINO ACID IMPORT ATP-BINDING PROTEIN"/>
    <property type="match status" value="1"/>
</dbReference>
<dbReference type="PANTHER" id="PTHR43166:SF30">
    <property type="entry name" value="METHIONINE IMPORT ATP-BINDING PROTEIN METN"/>
    <property type="match status" value="1"/>
</dbReference>
<dbReference type="Pfam" id="PF00005">
    <property type="entry name" value="ABC_tran"/>
    <property type="match status" value="1"/>
</dbReference>
<dbReference type="Pfam" id="PF09383">
    <property type="entry name" value="NIL"/>
    <property type="match status" value="1"/>
</dbReference>
<dbReference type="SMART" id="SM00382">
    <property type="entry name" value="AAA"/>
    <property type="match status" value="1"/>
</dbReference>
<dbReference type="SMART" id="SM00930">
    <property type="entry name" value="NIL"/>
    <property type="match status" value="1"/>
</dbReference>
<dbReference type="SUPFAM" id="SSF55021">
    <property type="entry name" value="ACT-like"/>
    <property type="match status" value="1"/>
</dbReference>
<dbReference type="SUPFAM" id="SSF52540">
    <property type="entry name" value="P-loop containing nucleoside triphosphate hydrolases"/>
    <property type="match status" value="1"/>
</dbReference>
<dbReference type="PROSITE" id="PS00211">
    <property type="entry name" value="ABC_TRANSPORTER_1"/>
    <property type="match status" value="1"/>
</dbReference>
<dbReference type="PROSITE" id="PS50893">
    <property type="entry name" value="ABC_TRANSPORTER_2"/>
    <property type="match status" value="1"/>
</dbReference>
<dbReference type="PROSITE" id="PS51264">
    <property type="entry name" value="METN"/>
    <property type="match status" value="1"/>
</dbReference>
<evidence type="ECO:0000255" key="1">
    <source>
        <dbReference type="HAMAP-Rule" id="MF_01719"/>
    </source>
</evidence>
<evidence type="ECO:0000305" key="2"/>
<proteinExistence type="inferred from homology"/>
<accession>Q87UV4</accession>